<gene>
    <name type="primary">ugt3a1</name>
</gene>
<accession>Q63ZR6</accession>
<keyword id="KW-0325">Glycoprotein</keyword>
<keyword id="KW-0328">Glycosyltransferase</keyword>
<keyword id="KW-0472">Membrane</keyword>
<keyword id="KW-1185">Reference proteome</keyword>
<keyword id="KW-0732">Signal</keyword>
<keyword id="KW-0808">Transferase</keyword>
<keyword id="KW-0812">Transmembrane</keyword>
<keyword id="KW-1133">Transmembrane helix</keyword>
<name>UD3A1_XENLA</name>
<organism>
    <name type="scientific">Xenopus laevis</name>
    <name type="common">African clawed frog</name>
    <dbReference type="NCBI Taxonomy" id="8355"/>
    <lineage>
        <taxon>Eukaryota</taxon>
        <taxon>Metazoa</taxon>
        <taxon>Chordata</taxon>
        <taxon>Craniata</taxon>
        <taxon>Vertebrata</taxon>
        <taxon>Euteleostomi</taxon>
        <taxon>Amphibia</taxon>
        <taxon>Batrachia</taxon>
        <taxon>Anura</taxon>
        <taxon>Pipoidea</taxon>
        <taxon>Pipidae</taxon>
        <taxon>Xenopodinae</taxon>
        <taxon>Xenopus</taxon>
        <taxon>Xenopus</taxon>
    </lineage>
</organism>
<protein>
    <recommendedName>
        <fullName>UDP-glucuronosyltransferase 3A1</fullName>
        <shortName>UDPGT 3A1</shortName>
        <ecNumber>2.4.1.17</ecNumber>
    </recommendedName>
</protein>
<dbReference type="EC" id="2.4.1.17"/>
<dbReference type="EMBL" id="BC082844">
    <property type="protein sequence ID" value="AAH82844.1"/>
    <property type="molecule type" value="mRNA"/>
</dbReference>
<dbReference type="RefSeq" id="NP_001088053.1">
    <property type="nucleotide sequence ID" value="NM_001094584.1"/>
</dbReference>
<dbReference type="SMR" id="Q63ZR6"/>
<dbReference type="CAZy" id="GT1">
    <property type="family name" value="Glycosyltransferase Family 1"/>
</dbReference>
<dbReference type="GlyCosmos" id="Q63ZR6">
    <property type="glycosylation" value="1 site, No reported glycans"/>
</dbReference>
<dbReference type="DNASU" id="494747"/>
<dbReference type="GeneID" id="494747"/>
<dbReference type="KEGG" id="xla:494747"/>
<dbReference type="AGR" id="Xenbase:XB-GENE-5824808"/>
<dbReference type="CTD" id="494747"/>
<dbReference type="Xenbase" id="XB-GENE-5824808">
    <property type="gene designation" value="ugt3a2.L"/>
</dbReference>
<dbReference type="OrthoDB" id="5835829at2759"/>
<dbReference type="Proteomes" id="UP000186698">
    <property type="component" value="Chromosome 1L"/>
</dbReference>
<dbReference type="Bgee" id="494747">
    <property type="expression patterns" value="Expressed in ovary and 8 other cell types or tissues"/>
</dbReference>
<dbReference type="GO" id="GO:0043541">
    <property type="term" value="C:UDP-N-acetylglucosamine transferase complex"/>
    <property type="evidence" value="ECO:0000318"/>
    <property type="project" value="GO_Central"/>
</dbReference>
<dbReference type="GO" id="GO:0015020">
    <property type="term" value="F:glucuronosyltransferase activity"/>
    <property type="evidence" value="ECO:0000318"/>
    <property type="project" value="GO_Central"/>
</dbReference>
<dbReference type="CDD" id="cd03784">
    <property type="entry name" value="GT1_Gtf-like"/>
    <property type="match status" value="1"/>
</dbReference>
<dbReference type="FunFam" id="3.40.50.2000:FF:000021">
    <property type="entry name" value="UDP-glucuronosyltransferase"/>
    <property type="match status" value="1"/>
</dbReference>
<dbReference type="Gene3D" id="3.40.50.2000">
    <property type="entry name" value="Glycogen Phosphorylase B"/>
    <property type="match status" value="2"/>
</dbReference>
<dbReference type="InterPro" id="IPR050271">
    <property type="entry name" value="UDP-glycosyltransferase"/>
</dbReference>
<dbReference type="InterPro" id="IPR002213">
    <property type="entry name" value="UDP_glucos_trans"/>
</dbReference>
<dbReference type="InterPro" id="IPR035595">
    <property type="entry name" value="UDP_glycos_trans_CS"/>
</dbReference>
<dbReference type="PANTHER" id="PTHR48043">
    <property type="entry name" value="EG:EG0003.4 PROTEIN-RELATED"/>
    <property type="match status" value="1"/>
</dbReference>
<dbReference type="PANTHER" id="PTHR48043:SF24">
    <property type="entry name" value="UDP-GLUCURONOSYLTRANSFERASE 3A2"/>
    <property type="match status" value="1"/>
</dbReference>
<dbReference type="Pfam" id="PF00201">
    <property type="entry name" value="UDPGT"/>
    <property type="match status" value="1"/>
</dbReference>
<dbReference type="SUPFAM" id="SSF53756">
    <property type="entry name" value="UDP-Glycosyltransferase/glycogen phosphorylase"/>
    <property type="match status" value="1"/>
</dbReference>
<dbReference type="PROSITE" id="PS00375">
    <property type="entry name" value="UDPGT"/>
    <property type="match status" value="1"/>
</dbReference>
<proteinExistence type="evidence at transcript level"/>
<comment type="function">
    <text evidence="1">UDP-glucuronosyltransferases catalyze phase II biotransformation reactions in which lipophilic substrates are conjugated with glucuronic acid to increase water solubility and enhance excretion. They are of major importance in the conjugation and subsequent elimination of potentially toxic xenobiotics and endogenous compounds (By similarity).</text>
</comment>
<comment type="catalytic activity">
    <reaction>
        <text>glucuronate acceptor + UDP-alpha-D-glucuronate = acceptor beta-D-glucuronoside + UDP + H(+)</text>
        <dbReference type="Rhea" id="RHEA:21032"/>
        <dbReference type="ChEBI" id="CHEBI:15378"/>
        <dbReference type="ChEBI" id="CHEBI:58052"/>
        <dbReference type="ChEBI" id="CHEBI:58223"/>
        <dbReference type="ChEBI" id="CHEBI:132367"/>
        <dbReference type="ChEBI" id="CHEBI:132368"/>
        <dbReference type="EC" id="2.4.1.17"/>
    </reaction>
</comment>
<comment type="subcellular location">
    <subcellularLocation>
        <location evidence="3">Membrane</location>
        <topology evidence="3">Single-pass type I membrane protein</topology>
    </subcellularLocation>
</comment>
<comment type="similarity">
    <text evidence="3">Belongs to the UDP-glycosyltransferase family.</text>
</comment>
<feature type="signal peptide" evidence="2">
    <location>
        <begin position="1"/>
        <end position="23"/>
    </location>
</feature>
<feature type="chain" id="PRO_0000299152" description="UDP-glucuronosyltransferase 3A1">
    <location>
        <begin position="24"/>
        <end position="523"/>
    </location>
</feature>
<feature type="topological domain" description="Extracellular" evidence="2">
    <location>
        <begin position="24"/>
        <end position="483"/>
    </location>
</feature>
<feature type="transmembrane region" description="Helical" evidence="2">
    <location>
        <begin position="484"/>
        <end position="504"/>
    </location>
</feature>
<feature type="topological domain" description="Cytoplasmic" evidence="2">
    <location>
        <begin position="505"/>
        <end position="523"/>
    </location>
</feature>
<feature type="glycosylation site" description="N-linked (GlcNAc...) asparagine" evidence="2">
    <location>
        <position position="125"/>
    </location>
</feature>
<sequence length="523" mass="60436">MAVGRKSLILSLLIQHFVLLHGAKILTVCFLGGSHYLWMDEISRILHNNGQEVTMFLQIADGLLPDYQMQESPYRLITWSLDKNYLKEFSEFFRDSKYNFKDCDELSSYLGLMTHFSRQCKMIFNQTSIMNLLKEEKYDLAVIDSFNPCTFLVSEKLGIPFIATHPFPVKSPWHSGIPNQLSYMPVYQSQLTDHMDFFERVKNVFMYIASAVLERKIYSLFDDVIEEHFPACSRPSFEELYKKTALWMYLTDFTIEFPHPFFPNVLYIGGVLAKPAKPVSEELEDFIAQSGEHGFIIVTFGSMVPSNPLTEFVKEMNDGFSKIPQKVIWRYRISEWPKVLQLAPNVKIMNWISQNDLLGHPKARLLVTHGGVNSIQEAIYHGVPMVAIPLFFDQFDNAVRIKAKHLGTFIPKDQLKAEKLANAIRDVIGGESYKNSAMHLSLIQRSQPFPKDQQIVRWVEHIVKVGGTDHLIPYSYQQPLYQQYLLDVFLFVCVCVIGACYLTVKLLKMFIQKLCSFRKLKQN</sequence>
<evidence type="ECO:0000250" key="1"/>
<evidence type="ECO:0000255" key="2"/>
<evidence type="ECO:0000305" key="3"/>
<reference key="1">
    <citation type="submission" date="2004-09" db="EMBL/GenBank/DDBJ databases">
        <authorList>
            <consortium name="NIH - Xenopus Gene Collection (XGC) project"/>
        </authorList>
    </citation>
    <scope>NUCLEOTIDE SEQUENCE [LARGE SCALE MRNA]</scope>
    <source>
        <tissue>Ovary</tissue>
    </source>
</reference>